<organism>
    <name type="scientific">Escherichia coli (strain K12)</name>
    <dbReference type="NCBI Taxonomy" id="83333"/>
    <lineage>
        <taxon>Bacteria</taxon>
        <taxon>Pseudomonadati</taxon>
        <taxon>Pseudomonadota</taxon>
        <taxon>Gammaproteobacteria</taxon>
        <taxon>Enterobacterales</taxon>
        <taxon>Enterobacteriaceae</taxon>
        <taxon>Escherichia</taxon>
    </lineage>
</organism>
<feature type="signal peptide" evidence="2">
    <location>
        <begin position="1"/>
        <end position="19"/>
    </location>
</feature>
<feature type="chain" id="PRO_0000003365" description="Prophage outer membrane lipoprotein RzoD">
    <location>
        <begin position="20"/>
        <end position="60"/>
    </location>
</feature>
<feature type="lipid moiety-binding region" description="N-palmitoyl cysteine" evidence="2">
    <location>
        <position position="20"/>
    </location>
</feature>
<feature type="lipid moiety-binding region" description="S-diacylglycerol cysteine" evidence="2">
    <location>
        <position position="20"/>
    </location>
</feature>
<feature type="disulfide bond" description="Interchain" evidence="1">
    <location>
        <position position="29"/>
    </location>
</feature>
<reference key="1">
    <citation type="journal article" date="1997" name="Science">
        <title>The complete genome sequence of Escherichia coli K-12.</title>
        <authorList>
            <person name="Blattner F.R."/>
            <person name="Plunkett G. III"/>
            <person name="Bloch C.A."/>
            <person name="Perna N.T."/>
            <person name="Burland V."/>
            <person name="Riley M."/>
            <person name="Collado-Vides J."/>
            <person name="Glasner J.D."/>
            <person name="Rode C.K."/>
            <person name="Mayhew G.F."/>
            <person name="Gregor J."/>
            <person name="Davis N.W."/>
            <person name="Kirkpatrick H.A."/>
            <person name="Goeden M.A."/>
            <person name="Rose D.J."/>
            <person name="Mau B."/>
            <person name="Shao Y."/>
        </authorList>
    </citation>
    <scope>NUCLEOTIDE SEQUENCE [LARGE SCALE GENOMIC DNA]</scope>
    <source>
        <strain>K12 / MG1655 / ATCC 47076</strain>
    </source>
</reference>
<reference key="2">
    <citation type="journal article" date="2006" name="Mol. Syst. Biol.">
        <title>Highly accurate genome sequences of Escherichia coli K-12 strains MG1655 and W3110.</title>
        <authorList>
            <person name="Hayashi K."/>
            <person name="Morooka N."/>
            <person name="Yamamoto Y."/>
            <person name="Fujita K."/>
            <person name="Isono K."/>
            <person name="Choi S."/>
            <person name="Ohtsubo E."/>
            <person name="Baba T."/>
            <person name="Wanner B.L."/>
            <person name="Mori H."/>
            <person name="Horiuchi T."/>
        </authorList>
    </citation>
    <scope>NUCLEOTIDE SEQUENCE [LARGE SCALE GENOMIC DNA]</scope>
    <source>
        <strain>K12 / W3110 / ATCC 27325 / DSM 5911</strain>
    </source>
</reference>
<evidence type="ECO:0000250" key="1"/>
<evidence type="ECO:0000255" key="2">
    <source>
        <dbReference type="PROSITE-ProRule" id="PRU00303"/>
    </source>
</evidence>
<evidence type="ECO:0000305" key="3"/>
<keyword id="KW-0998">Cell outer membrane</keyword>
<keyword id="KW-0204">Cytolysis</keyword>
<keyword id="KW-1015">Disulfide bond</keyword>
<keyword id="KW-0578">Host cell lysis by virus</keyword>
<keyword id="KW-0449">Lipoprotein</keyword>
<keyword id="KW-0472">Membrane</keyword>
<keyword id="KW-0564">Palmitate</keyword>
<keyword id="KW-1185">Reference proteome</keyword>
<keyword id="KW-0732">Signal</keyword>
<keyword id="KW-1188">Viral release from host cell</keyword>
<protein>
    <recommendedName>
        <fullName evidence="3">Prophage outer membrane lipoprotein RzoD</fullName>
        <shortName>o-spanin</shortName>
    </recommendedName>
    <alternativeName>
        <fullName>Outer membrane lipoprotein Rz1 from lambdoid prophage DLP12</fullName>
    </alternativeName>
    <alternativeName>
        <fullName>Spanin from lambdoid prophage DLP12, outer membrane subunit</fullName>
    </alternativeName>
</protein>
<name>RZOD_ECOLI</name>
<proteinExistence type="inferred from homology"/>
<dbReference type="EMBL" id="U00096">
    <property type="protein sequence ID" value="ABD18640.1"/>
    <property type="molecule type" value="Genomic_DNA"/>
</dbReference>
<dbReference type="EMBL" id="AP009048">
    <property type="protein sequence ID" value="BAE76332.1"/>
    <property type="molecule type" value="Genomic_DNA"/>
</dbReference>
<dbReference type="RefSeq" id="WP_001228697.1">
    <property type="nucleotide sequence ID" value="NZ_CP064683.1"/>
</dbReference>
<dbReference type="RefSeq" id="YP_588440.1">
    <property type="nucleotide sequence ID" value="NC_000913.3"/>
</dbReference>
<dbReference type="BioGRID" id="4259886">
    <property type="interactions" value="8"/>
</dbReference>
<dbReference type="FunCoup" id="P58041">
    <property type="interactions" value="3"/>
</dbReference>
<dbReference type="STRING" id="511145.b4510"/>
<dbReference type="PaxDb" id="511145-b4510"/>
<dbReference type="DNASU" id="1450242"/>
<dbReference type="EnsemblBacteria" id="ABD18640">
    <property type="protein sequence ID" value="ABD18640"/>
    <property type="gene ID" value="b4510"/>
</dbReference>
<dbReference type="GeneID" id="1450242"/>
<dbReference type="KEGG" id="ecj:JW5080"/>
<dbReference type="KEGG" id="eco:b4510"/>
<dbReference type="HOGENOM" id="CLU_146388_1_0_6"/>
<dbReference type="InParanoid" id="P58041"/>
<dbReference type="OrthoDB" id="6931613at2"/>
<dbReference type="BioCyc" id="EcoCyc:MONOMER0-2658"/>
<dbReference type="PRO" id="PR:P58041"/>
<dbReference type="Proteomes" id="UP000000625">
    <property type="component" value="Chromosome"/>
</dbReference>
<dbReference type="GO" id="GO:0009279">
    <property type="term" value="C:cell outer membrane"/>
    <property type="evidence" value="ECO:0007669"/>
    <property type="project" value="UniProtKB-SubCell"/>
</dbReference>
<dbReference type="GO" id="GO:0044659">
    <property type="term" value="P:viral release from host cell by cytolysis"/>
    <property type="evidence" value="ECO:0007669"/>
    <property type="project" value="InterPro"/>
</dbReference>
<dbReference type="InterPro" id="IPR010346">
    <property type="entry name" value="O-spanin"/>
</dbReference>
<dbReference type="Pfam" id="PF06085">
    <property type="entry name" value="Rz1"/>
    <property type="match status" value="1"/>
</dbReference>
<dbReference type="PROSITE" id="PS51257">
    <property type="entry name" value="PROKAR_LIPOPROTEIN"/>
    <property type="match status" value="1"/>
</dbReference>
<accession>P58041</accession>
<accession>Q2EEQ5</accession>
<accession>Q2MBM4</accession>
<gene>
    <name type="primary">rzoD</name>
    <name type="ordered locus">b4510</name>
    <name type="ordered locus">JW5080</name>
</gene>
<comment type="function">
    <text evidence="1">Component of the spanin complex that disrupts the outer membrane and causes cell lysis during virus exit. The spanin complex conducts the final step in cell lysis by disrupting the outer membrane after holin and endolysin action have permeabilized the inner membrane and degraded the host peptidoglycans (By similarity).</text>
</comment>
<comment type="subunit">
    <text evidence="1">Homodimer; disulfide-linked. Interacts (via C-terminus) with RZ (via C-terminus). Part of the spanin complex which spans the entire periplasmic space. The spanin complex is composed of spanin, inner membrane subunit and spanin, outer membrane subunit (By similarity).</text>
</comment>
<comment type="subcellular location">
    <subcellularLocation>
        <location evidence="1">Cell outer membrane</location>
        <topology evidence="2">Lipid-anchor</topology>
        <orientation evidence="1">Periplasmic side</orientation>
    </subcellularLocation>
</comment>
<comment type="miscellaneous">
    <text>Encoded by the cryptic lambdoid prophage DLP12.</text>
</comment>
<comment type="similarity">
    <text evidence="3">Belongs to the lambdalikevirus o-spanin family.</text>
</comment>
<sequence length="60" mass="6690">MRKLKMMLCVMMLPLVVVGCTSKQSVSQCVKPPRPPAWIMQPPPDWQTPLNGIISPSERG</sequence>